<comment type="function">
    <text evidence="4">Delta(8)-fatty-acid desaturase which introduces a double bond at the 8-position in the long-chain base (LCB) of ceramides. Required for the formation of the di-unsaturated sphingoid base (E,E)-sphinga-4,8-dienine during glucosylceramide (GluCer) biosynthesis.</text>
</comment>
<comment type="catalytic activity">
    <reaction evidence="4">
        <text>an N-acylsphing-4-enine + 2 Fe(II)-[cytochrome b5] + O2 + 2 H(+) = a (4E,8E)-4-sphinga-4,8-dienine ceramide + 2 Fe(III)-[cytochrome b5] + 2 H2O</text>
        <dbReference type="Rhea" id="RHEA:46280"/>
        <dbReference type="Rhea" id="RHEA-COMP:10438"/>
        <dbReference type="Rhea" id="RHEA-COMP:10439"/>
        <dbReference type="ChEBI" id="CHEBI:15377"/>
        <dbReference type="ChEBI" id="CHEBI:15378"/>
        <dbReference type="ChEBI" id="CHEBI:15379"/>
        <dbReference type="ChEBI" id="CHEBI:29033"/>
        <dbReference type="ChEBI" id="CHEBI:29034"/>
        <dbReference type="ChEBI" id="CHEBI:52639"/>
        <dbReference type="ChEBI" id="CHEBI:85953"/>
        <dbReference type="EC" id="1.14.19.18"/>
    </reaction>
</comment>
<comment type="pathway">
    <text evidence="7">Lipid metabolism; sphingolipid metabolism.</text>
</comment>
<comment type="subcellular location">
    <subcellularLocation>
        <location evidence="1">Membrane</location>
        <topology evidence="1">Multi-pass membrane protein</topology>
    </subcellularLocation>
</comment>
<comment type="disruption phenotype">
    <text evidence="4">Has a decreased hyphal growth rate and is highly sensitive to SDS and fluconazole.</text>
</comment>
<comment type="similarity">
    <text evidence="6">Belongs to the fatty acid desaturase type 1 family.</text>
</comment>
<keyword id="KW-0249">Electron transport</keyword>
<keyword id="KW-0349">Heme</keyword>
<keyword id="KW-0408">Iron</keyword>
<keyword id="KW-0443">Lipid metabolism</keyword>
<keyword id="KW-0472">Membrane</keyword>
<keyword id="KW-0479">Metal-binding</keyword>
<keyword id="KW-0560">Oxidoreductase</keyword>
<keyword id="KW-1185">Reference proteome</keyword>
<keyword id="KW-0746">Sphingolipid metabolism</keyword>
<keyword id="KW-0812">Transmembrane</keyword>
<keyword id="KW-1133">Transmembrane helix</keyword>
<keyword id="KW-0813">Transport</keyword>
<sequence length="584" mass="67383">MDVKRPKKIFTRSQIIDLIADGKVIVIYKNNVLNLTSWIKKHPGGDKAAYHMVGKDATDEMHAYHCDETVDTFTRFKIGEIEGPRWENLLPPIQGGIYAKGGHYGSLNNKNTSNKKTLDSKLDNDSSNSTSDLECLTTTNSCDSDISETEIANYKGIGFVPSVKPVVPQNQLVSKSNMDIVFPIIDEETKKKVIRNPKTLLNNYDNKLSQEDVMSLPALDYDSQQVLRDKYNELHQTIIDYGLYECDLWDYVREVTKIGSLFLYSLSFLKINQLFLSAVFMGMAWHQGTFIAHDAGHIGITHNYQIDNIFGMLIADWFGGLSLGWWKRNHNVHHLITNDPVHDPDIQHLPFFAVSVRLFQNVYSTYYDKILPFDKFSQFLIPLQKYLYYPILCFGRFNLYRLSWTHVLCGQGPRQGKAAWFRYFEFFGLSFFFYWFFYLLVFKTIEGGWNRFNYVMVSHITTMLVHVQITLSHFAMSTADLGVSESFPSRQVRTTMDVDCPEWLDFLHGGLQFQAIHHLFPRLPRHNLRKAQPFVIKFCEEVGLSYSIYGFGEGNEIVISRLADIGKQCSIFLDATKHYEGDLY</sequence>
<organism>
    <name type="scientific">Candida albicans (strain SC5314 / ATCC MYA-2876)</name>
    <name type="common">Yeast</name>
    <dbReference type="NCBI Taxonomy" id="237561"/>
    <lineage>
        <taxon>Eukaryota</taxon>
        <taxon>Fungi</taxon>
        <taxon>Dikarya</taxon>
        <taxon>Ascomycota</taxon>
        <taxon>Saccharomycotina</taxon>
        <taxon>Pichiomycetes</taxon>
        <taxon>Debaryomycetaceae</taxon>
        <taxon>Candida/Lodderomyces clade</taxon>
        <taxon>Candida</taxon>
    </lineage>
</organism>
<proteinExistence type="evidence at protein level"/>
<gene>
    <name evidence="5" type="primary">SLD1</name>
    <name type="ordered locus">CAALFM_C302680CA</name>
    <name type="ORF">CaO19.260</name>
</gene>
<feature type="chain" id="PRO_0000434805" description="Delta 8-(E)-sphingolipid desaturase">
    <location>
        <begin position="1"/>
        <end position="584"/>
    </location>
</feature>
<feature type="transmembrane region" description="Helical" evidence="1">
    <location>
        <begin position="261"/>
        <end position="281"/>
    </location>
</feature>
<feature type="transmembrane region" description="Helical" evidence="1">
    <location>
        <begin position="306"/>
        <end position="326"/>
    </location>
</feature>
<feature type="transmembrane region" description="Helical" evidence="1">
    <location>
        <begin position="386"/>
        <end position="403"/>
    </location>
</feature>
<feature type="transmembrane region" description="Helical" evidence="1">
    <location>
        <begin position="423"/>
        <end position="443"/>
    </location>
</feature>
<feature type="transmembrane region" description="Helical" evidence="1">
    <location>
        <begin position="455"/>
        <end position="475"/>
    </location>
</feature>
<feature type="domain" description="Cytochrome b5 heme-binding" evidence="2">
    <location>
        <begin position="7"/>
        <end position="82"/>
    </location>
</feature>
<feature type="region of interest" description="Disordered" evidence="3">
    <location>
        <begin position="109"/>
        <end position="134"/>
    </location>
</feature>
<feature type="short sequence motif" description="Histidine box-1" evidence="6">
    <location>
        <begin position="293"/>
        <end position="297"/>
    </location>
</feature>
<feature type="short sequence motif" description="Histidine box-2" evidence="6">
    <location>
        <begin position="330"/>
        <end position="334"/>
    </location>
</feature>
<feature type="short sequence motif" description="Histidine box-3" evidence="6">
    <location>
        <begin position="514"/>
        <end position="518"/>
    </location>
</feature>
<feature type="binding site" description="axial binding residue" evidence="2">
    <location>
        <position position="42"/>
    </location>
    <ligand>
        <name>heme</name>
        <dbReference type="ChEBI" id="CHEBI:30413"/>
    </ligand>
    <ligandPart>
        <name>Fe</name>
        <dbReference type="ChEBI" id="CHEBI:18248"/>
    </ligandPart>
</feature>
<feature type="binding site" description="axial binding residue" evidence="2">
    <location>
        <position position="65"/>
    </location>
    <ligand>
        <name>heme</name>
        <dbReference type="ChEBI" id="CHEBI:30413"/>
    </ligand>
    <ligandPart>
        <name>Fe</name>
        <dbReference type="ChEBI" id="CHEBI:18248"/>
    </ligandPart>
</feature>
<protein>
    <recommendedName>
        <fullName evidence="5">Delta 8-(E)-sphingolipid desaturase</fullName>
        <ecNumber evidence="4">1.14.19.18</ecNumber>
    </recommendedName>
</protein>
<dbReference type="EC" id="1.14.19.18" evidence="4"/>
<dbReference type="EMBL" id="CP017625">
    <property type="protein sequence ID" value="AOW28301.1"/>
    <property type="molecule type" value="Genomic_DNA"/>
</dbReference>
<dbReference type="RefSeq" id="XP_719958.2">
    <property type="nucleotide sequence ID" value="XM_714865.2"/>
</dbReference>
<dbReference type="SMR" id="Q5AEK8"/>
<dbReference type="STRING" id="237561.Q5AEK8"/>
<dbReference type="EnsemblFungi" id="C3_02680C_A-T">
    <property type="protein sequence ID" value="C3_02680C_A-T-p1"/>
    <property type="gene ID" value="C3_02680C_A"/>
</dbReference>
<dbReference type="GeneID" id="3638406"/>
<dbReference type="KEGG" id="cal:CAALFM_C302680CA"/>
<dbReference type="CGD" id="CAL0000198953">
    <property type="gene designation" value="SLD1"/>
</dbReference>
<dbReference type="VEuPathDB" id="FungiDB:C3_02680C_A"/>
<dbReference type="eggNOG" id="KOG4232">
    <property type="taxonomic scope" value="Eukaryota"/>
</dbReference>
<dbReference type="HOGENOM" id="CLU_016265_3_1_1"/>
<dbReference type="InParanoid" id="Q5AEK8"/>
<dbReference type="OMA" id="LYNCNYF"/>
<dbReference type="OrthoDB" id="260091at2759"/>
<dbReference type="UniPathway" id="UPA00222"/>
<dbReference type="Proteomes" id="UP000000559">
    <property type="component" value="Chromosome 3"/>
</dbReference>
<dbReference type="GO" id="GO:0016020">
    <property type="term" value="C:membrane"/>
    <property type="evidence" value="ECO:0007669"/>
    <property type="project" value="UniProtKB-SubCell"/>
</dbReference>
<dbReference type="GO" id="GO:0046872">
    <property type="term" value="F:metal ion binding"/>
    <property type="evidence" value="ECO:0007669"/>
    <property type="project" value="UniProtKB-KW"/>
</dbReference>
<dbReference type="GO" id="GO:0016705">
    <property type="term" value="F:oxidoreductase activity, acting on paired donors, with incorporation or reduction of molecular oxygen"/>
    <property type="evidence" value="ECO:0000315"/>
    <property type="project" value="CGD"/>
</dbReference>
<dbReference type="GO" id="GO:0016717">
    <property type="term" value="F:oxidoreductase activity, acting on paired donors, with oxidation of a pair of donors resulting in the reduction of molecular oxygen to two molecules of water"/>
    <property type="evidence" value="ECO:0000318"/>
    <property type="project" value="GO_Central"/>
</dbReference>
<dbReference type="GO" id="GO:0006679">
    <property type="term" value="P:glucosylceramide biosynthetic process"/>
    <property type="evidence" value="ECO:0000315"/>
    <property type="project" value="CGD"/>
</dbReference>
<dbReference type="GO" id="GO:0006629">
    <property type="term" value="P:lipid metabolic process"/>
    <property type="evidence" value="ECO:0000318"/>
    <property type="project" value="GO_Central"/>
</dbReference>
<dbReference type="GO" id="GO:0007009">
    <property type="term" value="P:plasma membrane organization"/>
    <property type="evidence" value="ECO:0000315"/>
    <property type="project" value="CGD"/>
</dbReference>
<dbReference type="GO" id="GO:0006665">
    <property type="term" value="P:sphingolipid metabolic process"/>
    <property type="evidence" value="ECO:0000315"/>
    <property type="project" value="CGD"/>
</dbReference>
<dbReference type="CDD" id="cd03506">
    <property type="entry name" value="Delta6-FADS-like"/>
    <property type="match status" value="1"/>
</dbReference>
<dbReference type="Gene3D" id="3.10.120.10">
    <property type="entry name" value="Cytochrome b5-like heme/steroid binding domain"/>
    <property type="match status" value="1"/>
</dbReference>
<dbReference type="InterPro" id="IPR001199">
    <property type="entry name" value="Cyt_B5-like_heme/steroid-bd"/>
</dbReference>
<dbReference type="InterPro" id="IPR036400">
    <property type="entry name" value="Cyt_B5-like_heme/steroid_sf"/>
</dbReference>
<dbReference type="InterPro" id="IPR005804">
    <property type="entry name" value="FA_desaturase_dom"/>
</dbReference>
<dbReference type="InterPro" id="IPR012171">
    <property type="entry name" value="Fatty_acid_desaturase"/>
</dbReference>
<dbReference type="PANTHER" id="PTHR19353:SF30">
    <property type="entry name" value="DELTA 8-(E)-SPHINGOLIPID DESATURASE"/>
    <property type="match status" value="1"/>
</dbReference>
<dbReference type="PANTHER" id="PTHR19353">
    <property type="entry name" value="FATTY ACID DESATURASE 2"/>
    <property type="match status" value="1"/>
</dbReference>
<dbReference type="Pfam" id="PF00173">
    <property type="entry name" value="Cyt-b5"/>
    <property type="match status" value="1"/>
</dbReference>
<dbReference type="Pfam" id="PF00487">
    <property type="entry name" value="FA_desaturase"/>
    <property type="match status" value="1"/>
</dbReference>
<dbReference type="PIRSF" id="PIRSF015921">
    <property type="entry name" value="FA_sphinglp_des"/>
    <property type="match status" value="1"/>
</dbReference>
<dbReference type="SMART" id="SM01117">
    <property type="entry name" value="Cyt-b5"/>
    <property type="match status" value="1"/>
</dbReference>
<dbReference type="SUPFAM" id="SSF55856">
    <property type="entry name" value="Cytochrome b5-like heme/steroid binding domain"/>
    <property type="match status" value="1"/>
</dbReference>
<dbReference type="PROSITE" id="PS50255">
    <property type="entry name" value="CYTOCHROME_B5_2"/>
    <property type="match status" value="1"/>
</dbReference>
<evidence type="ECO:0000255" key="1"/>
<evidence type="ECO:0000255" key="2">
    <source>
        <dbReference type="PROSITE-ProRule" id="PRU00279"/>
    </source>
</evidence>
<evidence type="ECO:0000256" key="3">
    <source>
        <dbReference type="SAM" id="MobiDB-lite"/>
    </source>
</evidence>
<evidence type="ECO:0000269" key="4">
    <source>
    </source>
</evidence>
<evidence type="ECO:0000303" key="5">
    <source>
    </source>
</evidence>
<evidence type="ECO:0000305" key="6"/>
<evidence type="ECO:0000305" key="7">
    <source>
    </source>
</evidence>
<name>SLD1_CANAL</name>
<reference key="1">
    <citation type="journal article" date="2004" name="Proc. Natl. Acad. Sci. U.S.A.">
        <title>The diploid genome sequence of Candida albicans.</title>
        <authorList>
            <person name="Jones T."/>
            <person name="Federspiel N.A."/>
            <person name="Chibana H."/>
            <person name="Dungan J."/>
            <person name="Kalman S."/>
            <person name="Magee B.B."/>
            <person name="Newport G."/>
            <person name="Thorstenson Y.R."/>
            <person name="Agabian N."/>
            <person name="Magee P.T."/>
            <person name="Davis R.W."/>
            <person name="Scherer S."/>
        </authorList>
    </citation>
    <scope>NUCLEOTIDE SEQUENCE [LARGE SCALE GENOMIC DNA]</scope>
    <source>
        <strain>SC5314 / ATCC MYA-2876</strain>
    </source>
</reference>
<reference key="2">
    <citation type="journal article" date="2007" name="Genome Biol.">
        <title>Assembly of the Candida albicans genome into sixteen supercontigs aligned on the eight chromosomes.</title>
        <authorList>
            <person name="van het Hoog M."/>
            <person name="Rast T.J."/>
            <person name="Martchenko M."/>
            <person name="Grindle S."/>
            <person name="Dignard D."/>
            <person name="Hogues H."/>
            <person name="Cuomo C."/>
            <person name="Berriman M."/>
            <person name="Scherer S."/>
            <person name="Magee B.B."/>
            <person name="Whiteway M."/>
            <person name="Chibana H."/>
            <person name="Nantel A."/>
            <person name="Magee P.T."/>
        </authorList>
    </citation>
    <scope>GENOME REANNOTATION</scope>
    <source>
        <strain>SC5314 / ATCC MYA-2876</strain>
    </source>
</reference>
<reference key="3">
    <citation type="journal article" date="2013" name="Genome Biol.">
        <title>Assembly of a phased diploid Candida albicans genome facilitates allele-specific measurements and provides a simple model for repeat and indel structure.</title>
        <authorList>
            <person name="Muzzey D."/>
            <person name="Schwartz K."/>
            <person name="Weissman J.S."/>
            <person name="Sherlock G."/>
        </authorList>
    </citation>
    <scope>NUCLEOTIDE SEQUENCE [LARGE SCALE GENOMIC DNA]</scope>
    <scope>GENOME REANNOTATION</scope>
    <source>
        <strain>SC5314 / ATCC MYA-2876</strain>
    </source>
</reference>
<reference key="4">
    <citation type="journal article" date="2008" name="Microbiology">
        <title>Disruption of the sphingolipid delta(8)-desaturase gene causes a delay in morphological changes in Candida albicans.</title>
        <authorList>
            <person name="Oura T."/>
            <person name="Kajiwara S."/>
        </authorList>
    </citation>
    <scope>FUNCTION</scope>
    <scope>CATALYTIC ACTIVITY</scope>
    <scope>PATHWAY</scope>
    <scope>DISRUPTION PHENOTYPE</scope>
</reference>
<accession>Q5AEK8</accession>
<accession>A0A1D8PJJ1</accession>